<evidence type="ECO:0000255" key="1">
    <source>
        <dbReference type="HAMAP-Rule" id="MF_00518"/>
    </source>
</evidence>
<accession>Q220S3</accession>
<proteinExistence type="inferred from homology"/>
<dbReference type="EC" id="3.1.1.96" evidence="1"/>
<dbReference type="EMBL" id="CP000267">
    <property type="protein sequence ID" value="ABD68480.1"/>
    <property type="molecule type" value="Genomic_DNA"/>
</dbReference>
<dbReference type="RefSeq" id="WP_011463053.1">
    <property type="nucleotide sequence ID" value="NC_007908.1"/>
</dbReference>
<dbReference type="SMR" id="Q220S3"/>
<dbReference type="STRING" id="338969.Rfer_0730"/>
<dbReference type="KEGG" id="rfr:Rfer_0730"/>
<dbReference type="eggNOG" id="COG1490">
    <property type="taxonomic scope" value="Bacteria"/>
</dbReference>
<dbReference type="HOGENOM" id="CLU_076901_1_1_4"/>
<dbReference type="OrthoDB" id="9801395at2"/>
<dbReference type="Proteomes" id="UP000008332">
    <property type="component" value="Chromosome"/>
</dbReference>
<dbReference type="GO" id="GO:0005737">
    <property type="term" value="C:cytoplasm"/>
    <property type="evidence" value="ECO:0007669"/>
    <property type="project" value="UniProtKB-SubCell"/>
</dbReference>
<dbReference type="GO" id="GO:0051500">
    <property type="term" value="F:D-tyrosyl-tRNA(Tyr) deacylase activity"/>
    <property type="evidence" value="ECO:0007669"/>
    <property type="project" value="TreeGrafter"/>
</dbReference>
<dbReference type="GO" id="GO:0106026">
    <property type="term" value="F:Gly-tRNA(Ala) deacylase activity"/>
    <property type="evidence" value="ECO:0007669"/>
    <property type="project" value="UniProtKB-UniRule"/>
</dbReference>
<dbReference type="GO" id="GO:0043908">
    <property type="term" value="F:Ser(Gly)-tRNA(Ala) hydrolase activity"/>
    <property type="evidence" value="ECO:0007669"/>
    <property type="project" value="UniProtKB-UniRule"/>
</dbReference>
<dbReference type="GO" id="GO:0000049">
    <property type="term" value="F:tRNA binding"/>
    <property type="evidence" value="ECO:0007669"/>
    <property type="project" value="UniProtKB-UniRule"/>
</dbReference>
<dbReference type="GO" id="GO:0019478">
    <property type="term" value="P:D-amino acid catabolic process"/>
    <property type="evidence" value="ECO:0007669"/>
    <property type="project" value="UniProtKB-UniRule"/>
</dbReference>
<dbReference type="FunFam" id="3.50.80.10:FF:000001">
    <property type="entry name" value="D-aminoacyl-tRNA deacylase"/>
    <property type="match status" value="1"/>
</dbReference>
<dbReference type="Gene3D" id="3.50.80.10">
    <property type="entry name" value="D-tyrosyl-tRNA(Tyr) deacylase"/>
    <property type="match status" value="1"/>
</dbReference>
<dbReference type="HAMAP" id="MF_00518">
    <property type="entry name" value="Deacylase_Dtd"/>
    <property type="match status" value="1"/>
</dbReference>
<dbReference type="InterPro" id="IPR003732">
    <property type="entry name" value="Daa-tRNA_deacyls_DTD"/>
</dbReference>
<dbReference type="InterPro" id="IPR023509">
    <property type="entry name" value="DTD-like_sf"/>
</dbReference>
<dbReference type="NCBIfam" id="TIGR00256">
    <property type="entry name" value="D-aminoacyl-tRNA deacylase"/>
    <property type="match status" value="1"/>
</dbReference>
<dbReference type="PANTHER" id="PTHR10472:SF5">
    <property type="entry name" value="D-AMINOACYL-TRNA DEACYLASE 1"/>
    <property type="match status" value="1"/>
</dbReference>
<dbReference type="PANTHER" id="PTHR10472">
    <property type="entry name" value="D-TYROSYL-TRNA TYR DEACYLASE"/>
    <property type="match status" value="1"/>
</dbReference>
<dbReference type="Pfam" id="PF02580">
    <property type="entry name" value="Tyr_Deacylase"/>
    <property type="match status" value="1"/>
</dbReference>
<dbReference type="SUPFAM" id="SSF69500">
    <property type="entry name" value="DTD-like"/>
    <property type="match status" value="1"/>
</dbReference>
<feature type="chain" id="PRO_0000259305" description="D-aminoacyl-tRNA deacylase">
    <location>
        <begin position="1"/>
        <end position="159"/>
    </location>
</feature>
<feature type="short sequence motif" description="Gly-cisPro motif, important for rejection of L-amino acids" evidence="1">
    <location>
        <begin position="142"/>
        <end position="143"/>
    </location>
</feature>
<sequence length="159" mass="16763">MIAVLQRVSEARVLIEGQIVGEIGAGLLLLLCAERGDSETESDKLLSKVLKLRIFSDAAGKMNHSLQDMDGRGTAGGLLVVSQFTLAADVSGGNRPGFTLAAAPAQGRRLYDHFVAQARRAHPVVRTGQFGADMQVHLVNDGPVTIPLRMAPPAGVAPE</sequence>
<organism>
    <name type="scientific">Albidiferax ferrireducens (strain ATCC BAA-621 / DSM 15236 / T118)</name>
    <name type="common">Rhodoferax ferrireducens</name>
    <dbReference type="NCBI Taxonomy" id="338969"/>
    <lineage>
        <taxon>Bacteria</taxon>
        <taxon>Pseudomonadati</taxon>
        <taxon>Pseudomonadota</taxon>
        <taxon>Betaproteobacteria</taxon>
        <taxon>Burkholderiales</taxon>
        <taxon>Comamonadaceae</taxon>
        <taxon>Rhodoferax</taxon>
    </lineage>
</organism>
<gene>
    <name evidence="1" type="primary">dtd</name>
    <name type="ordered locus">Rfer_0730</name>
</gene>
<comment type="function">
    <text evidence="1">An aminoacyl-tRNA editing enzyme that deacylates mischarged D-aminoacyl-tRNAs. Also deacylates mischarged glycyl-tRNA(Ala), protecting cells against glycine mischarging by AlaRS. Acts via tRNA-based rather than protein-based catalysis; rejects L-amino acids rather than detecting D-amino acids in the active site. By recycling D-aminoacyl-tRNA to D-amino acids and free tRNA molecules, this enzyme counteracts the toxicity associated with the formation of D-aminoacyl-tRNA entities in vivo and helps enforce protein L-homochirality.</text>
</comment>
<comment type="catalytic activity">
    <reaction evidence="1">
        <text>glycyl-tRNA(Ala) + H2O = tRNA(Ala) + glycine + H(+)</text>
        <dbReference type="Rhea" id="RHEA:53744"/>
        <dbReference type="Rhea" id="RHEA-COMP:9657"/>
        <dbReference type="Rhea" id="RHEA-COMP:13640"/>
        <dbReference type="ChEBI" id="CHEBI:15377"/>
        <dbReference type="ChEBI" id="CHEBI:15378"/>
        <dbReference type="ChEBI" id="CHEBI:57305"/>
        <dbReference type="ChEBI" id="CHEBI:78442"/>
        <dbReference type="ChEBI" id="CHEBI:78522"/>
        <dbReference type="EC" id="3.1.1.96"/>
    </reaction>
</comment>
<comment type="catalytic activity">
    <reaction evidence="1">
        <text>a D-aminoacyl-tRNA + H2O = a tRNA + a D-alpha-amino acid + H(+)</text>
        <dbReference type="Rhea" id="RHEA:13953"/>
        <dbReference type="Rhea" id="RHEA-COMP:10123"/>
        <dbReference type="Rhea" id="RHEA-COMP:10124"/>
        <dbReference type="ChEBI" id="CHEBI:15377"/>
        <dbReference type="ChEBI" id="CHEBI:15378"/>
        <dbReference type="ChEBI" id="CHEBI:59871"/>
        <dbReference type="ChEBI" id="CHEBI:78442"/>
        <dbReference type="ChEBI" id="CHEBI:79333"/>
        <dbReference type="EC" id="3.1.1.96"/>
    </reaction>
</comment>
<comment type="subunit">
    <text evidence="1">Homodimer.</text>
</comment>
<comment type="subcellular location">
    <subcellularLocation>
        <location evidence="1">Cytoplasm</location>
    </subcellularLocation>
</comment>
<comment type="domain">
    <text evidence="1">A Gly-cisPro motif from one monomer fits into the active site of the other monomer to allow specific chiral rejection of L-amino acids.</text>
</comment>
<comment type="similarity">
    <text evidence="1">Belongs to the DTD family.</text>
</comment>
<name>DTD_ALBFT</name>
<protein>
    <recommendedName>
        <fullName evidence="1">D-aminoacyl-tRNA deacylase</fullName>
        <shortName evidence="1">DTD</shortName>
        <ecNumber evidence="1">3.1.1.96</ecNumber>
    </recommendedName>
    <alternativeName>
        <fullName evidence="1">Gly-tRNA(Ala) deacylase</fullName>
    </alternativeName>
</protein>
<reference key="1">
    <citation type="submission" date="2006-02" db="EMBL/GenBank/DDBJ databases">
        <title>Complete sequence of chromosome of Rhodoferax ferrireducens DSM 15236.</title>
        <authorList>
            <person name="Copeland A."/>
            <person name="Lucas S."/>
            <person name="Lapidus A."/>
            <person name="Barry K."/>
            <person name="Detter J.C."/>
            <person name="Glavina del Rio T."/>
            <person name="Hammon N."/>
            <person name="Israni S."/>
            <person name="Pitluck S."/>
            <person name="Brettin T."/>
            <person name="Bruce D."/>
            <person name="Han C."/>
            <person name="Tapia R."/>
            <person name="Gilna P."/>
            <person name="Kiss H."/>
            <person name="Schmutz J."/>
            <person name="Larimer F."/>
            <person name="Land M."/>
            <person name="Kyrpides N."/>
            <person name="Ivanova N."/>
            <person name="Richardson P."/>
        </authorList>
    </citation>
    <scope>NUCLEOTIDE SEQUENCE [LARGE SCALE GENOMIC DNA]</scope>
    <source>
        <strain>ATCC BAA-621 / DSM 15236 / T118</strain>
    </source>
</reference>
<keyword id="KW-0963">Cytoplasm</keyword>
<keyword id="KW-0378">Hydrolase</keyword>
<keyword id="KW-1185">Reference proteome</keyword>
<keyword id="KW-0694">RNA-binding</keyword>
<keyword id="KW-0820">tRNA-binding</keyword>